<evidence type="ECO:0000250" key="1"/>
<evidence type="ECO:0000250" key="2">
    <source>
        <dbReference type="UniProtKB" id="P00157"/>
    </source>
</evidence>
<evidence type="ECO:0000255" key="3">
    <source>
        <dbReference type="PROSITE-ProRule" id="PRU00967"/>
    </source>
</evidence>
<evidence type="ECO:0000255" key="4">
    <source>
        <dbReference type="PROSITE-ProRule" id="PRU00968"/>
    </source>
</evidence>
<accession>Q9T7L7</accession>
<organism>
    <name type="scientific">Microtus richardsoni</name>
    <name type="common">Water vole</name>
    <dbReference type="NCBI Taxonomy" id="111840"/>
    <lineage>
        <taxon>Eukaryota</taxon>
        <taxon>Metazoa</taxon>
        <taxon>Chordata</taxon>
        <taxon>Craniata</taxon>
        <taxon>Vertebrata</taxon>
        <taxon>Euteleostomi</taxon>
        <taxon>Mammalia</taxon>
        <taxon>Eutheria</taxon>
        <taxon>Euarchontoglires</taxon>
        <taxon>Glires</taxon>
        <taxon>Rodentia</taxon>
        <taxon>Myomorpha</taxon>
        <taxon>Muroidea</taxon>
        <taxon>Cricetidae</taxon>
        <taxon>Arvicolinae</taxon>
        <taxon>Microtus</taxon>
    </lineage>
</organism>
<protein>
    <recommendedName>
        <fullName>Cytochrome b</fullName>
    </recommendedName>
    <alternativeName>
        <fullName>Complex III subunit 3</fullName>
    </alternativeName>
    <alternativeName>
        <fullName>Complex III subunit III</fullName>
    </alternativeName>
    <alternativeName>
        <fullName>Cytochrome b-c1 complex subunit 3</fullName>
    </alternativeName>
    <alternativeName>
        <fullName>Ubiquinol-cytochrome-c reductase complex cytochrome b subunit</fullName>
    </alternativeName>
</protein>
<keyword id="KW-0249">Electron transport</keyword>
<keyword id="KW-0349">Heme</keyword>
<keyword id="KW-0408">Iron</keyword>
<keyword id="KW-0472">Membrane</keyword>
<keyword id="KW-0479">Metal-binding</keyword>
<keyword id="KW-0496">Mitochondrion</keyword>
<keyword id="KW-0999">Mitochondrion inner membrane</keyword>
<keyword id="KW-0679">Respiratory chain</keyword>
<keyword id="KW-0812">Transmembrane</keyword>
<keyword id="KW-1133">Transmembrane helix</keyword>
<keyword id="KW-0813">Transport</keyword>
<keyword id="KW-0830">Ubiquinone</keyword>
<name>CYB_MICRI</name>
<reference key="1">
    <citation type="journal article" date="2000" name="J. Mammal.">
        <title>Molecular systematics of a holarctic rodent (Microtus, Muridae).</title>
        <authorList>
            <person name="Conroy C.J."/>
            <person name="Cook J.A."/>
        </authorList>
    </citation>
    <scope>NUCLEOTIDE SEQUENCE [GENOMIC DNA]</scope>
</reference>
<sequence length="380" mass="42910">MTIIRKKHPLIKIINHSFIDLPTPSNISSWWNFGSLLGLCLIMQILTGLFLAMHYTSDTATAFSSVAHICRDVNYGWLIRYMHANGASMFFICLFLHVGRGVYYGSYNMIETWNMGIILLFAVMATAFMGYVLPWGQMSFWGATVITNLLSAIPYIGTTLVEWIWGGFSVDKATLTRFFAFHFILPFIITALVLVHLLFLHETGSNNPTGLNSDSDKIPFHPYFTIKDFLGALILLMAFMILTLFFPDILGDPDNYTPANPLNTPPHIKPEWYFLFAYAILRSIPNKLGGVLALILSILILAIMPLLHTSKQRTLTFRPITQTMYWILVADLFILTWIGGQPVEYPFTIIGQTASIAYFTIIVILMPIAGMIENNILDLD</sequence>
<feature type="chain" id="PRO_0000257922" description="Cytochrome b">
    <location>
        <begin position="1"/>
        <end position="380"/>
    </location>
</feature>
<feature type="transmembrane region" description="Helical" evidence="2">
    <location>
        <begin position="33"/>
        <end position="53"/>
    </location>
</feature>
<feature type="transmembrane region" description="Helical" evidence="2">
    <location>
        <begin position="77"/>
        <end position="98"/>
    </location>
</feature>
<feature type="transmembrane region" description="Helical" evidence="2">
    <location>
        <begin position="113"/>
        <end position="133"/>
    </location>
</feature>
<feature type="transmembrane region" description="Helical" evidence="2">
    <location>
        <begin position="178"/>
        <end position="198"/>
    </location>
</feature>
<feature type="transmembrane region" description="Helical" evidence="2">
    <location>
        <begin position="226"/>
        <end position="246"/>
    </location>
</feature>
<feature type="transmembrane region" description="Helical" evidence="2">
    <location>
        <begin position="288"/>
        <end position="308"/>
    </location>
</feature>
<feature type="transmembrane region" description="Helical" evidence="2">
    <location>
        <begin position="320"/>
        <end position="340"/>
    </location>
</feature>
<feature type="transmembrane region" description="Helical" evidence="2">
    <location>
        <begin position="347"/>
        <end position="367"/>
    </location>
</feature>
<feature type="binding site" description="axial binding residue" evidence="2">
    <location>
        <position position="83"/>
    </location>
    <ligand>
        <name>heme b</name>
        <dbReference type="ChEBI" id="CHEBI:60344"/>
        <label>b562</label>
    </ligand>
    <ligandPart>
        <name>Fe</name>
        <dbReference type="ChEBI" id="CHEBI:18248"/>
    </ligandPart>
</feature>
<feature type="binding site" description="axial binding residue" evidence="2">
    <location>
        <position position="97"/>
    </location>
    <ligand>
        <name>heme b</name>
        <dbReference type="ChEBI" id="CHEBI:60344"/>
        <label>b566</label>
    </ligand>
    <ligandPart>
        <name>Fe</name>
        <dbReference type="ChEBI" id="CHEBI:18248"/>
    </ligandPart>
</feature>
<feature type="binding site" description="axial binding residue" evidence="2">
    <location>
        <position position="182"/>
    </location>
    <ligand>
        <name>heme b</name>
        <dbReference type="ChEBI" id="CHEBI:60344"/>
        <label>b562</label>
    </ligand>
    <ligandPart>
        <name>Fe</name>
        <dbReference type="ChEBI" id="CHEBI:18248"/>
    </ligandPart>
</feature>
<feature type="binding site" description="axial binding residue" evidence="2">
    <location>
        <position position="196"/>
    </location>
    <ligand>
        <name>heme b</name>
        <dbReference type="ChEBI" id="CHEBI:60344"/>
        <label>b566</label>
    </ligand>
    <ligandPart>
        <name>Fe</name>
        <dbReference type="ChEBI" id="CHEBI:18248"/>
    </ligandPart>
</feature>
<feature type="binding site" evidence="2">
    <location>
        <position position="201"/>
    </location>
    <ligand>
        <name>a ubiquinone</name>
        <dbReference type="ChEBI" id="CHEBI:16389"/>
    </ligand>
</feature>
<comment type="function">
    <text evidence="2">Component of the ubiquinol-cytochrome c reductase complex (complex III or cytochrome b-c1 complex) that is part of the mitochondrial respiratory chain. The b-c1 complex mediates electron transfer from ubiquinol to cytochrome c. Contributes to the generation of a proton gradient across the mitochondrial membrane that is then used for ATP synthesis.</text>
</comment>
<comment type="cofactor">
    <cofactor evidence="2">
        <name>heme b</name>
        <dbReference type="ChEBI" id="CHEBI:60344"/>
    </cofactor>
    <text evidence="2">Binds 2 heme b groups non-covalently.</text>
</comment>
<comment type="subunit">
    <text evidence="2">The cytochrome bc1 complex contains 11 subunits: 3 respiratory subunits (MT-CYB, CYC1 and UQCRFS1), 2 core proteins (UQCRC1 and UQCRC2) and 6 low-molecular weight proteins (UQCRH/QCR6, UQCRB/QCR7, UQCRQ/QCR8, UQCR10/QCR9, UQCR11/QCR10 and a cleavage product of UQCRFS1). This cytochrome bc1 complex then forms a dimer.</text>
</comment>
<comment type="subcellular location">
    <subcellularLocation>
        <location evidence="2">Mitochondrion inner membrane</location>
        <topology evidence="2">Multi-pass membrane protein</topology>
    </subcellularLocation>
</comment>
<comment type="miscellaneous">
    <text evidence="1">Heme 1 (or BL or b562) is low-potential and absorbs at about 562 nm, and heme 2 (or BH or b566) is high-potential and absorbs at about 566 nm.</text>
</comment>
<comment type="similarity">
    <text evidence="3 4">Belongs to the cytochrome b family.</text>
</comment>
<comment type="caution">
    <text evidence="2">The full-length protein contains only eight transmembrane helices, not nine as predicted by bioinformatics tools.</text>
</comment>
<gene>
    <name type="primary">MT-CYB</name>
    <name type="synonym">COB</name>
    <name type="synonym">CYTB</name>
    <name type="synonym">MTCYB</name>
</gene>
<geneLocation type="mitochondrion"/>
<dbReference type="EMBL" id="AF163905">
    <property type="protein sequence ID" value="AAF24197.1"/>
    <property type="molecule type" value="Genomic_DNA"/>
</dbReference>
<dbReference type="SMR" id="Q9T7L7"/>
<dbReference type="GO" id="GO:0005743">
    <property type="term" value="C:mitochondrial inner membrane"/>
    <property type="evidence" value="ECO:0007669"/>
    <property type="project" value="UniProtKB-SubCell"/>
</dbReference>
<dbReference type="GO" id="GO:0045275">
    <property type="term" value="C:respiratory chain complex III"/>
    <property type="evidence" value="ECO:0007669"/>
    <property type="project" value="InterPro"/>
</dbReference>
<dbReference type="GO" id="GO:0046872">
    <property type="term" value="F:metal ion binding"/>
    <property type="evidence" value="ECO:0007669"/>
    <property type="project" value="UniProtKB-KW"/>
</dbReference>
<dbReference type="GO" id="GO:0008121">
    <property type="term" value="F:ubiquinol-cytochrome-c reductase activity"/>
    <property type="evidence" value="ECO:0007669"/>
    <property type="project" value="InterPro"/>
</dbReference>
<dbReference type="GO" id="GO:0006122">
    <property type="term" value="P:mitochondrial electron transport, ubiquinol to cytochrome c"/>
    <property type="evidence" value="ECO:0007669"/>
    <property type="project" value="TreeGrafter"/>
</dbReference>
<dbReference type="CDD" id="cd00290">
    <property type="entry name" value="cytochrome_b_C"/>
    <property type="match status" value="1"/>
</dbReference>
<dbReference type="CDD" id="cd00284">
    <property type="entry name" value="Cytochrome_b_N"/>
    <property type="match status" value="1"/>
</dbReference>
<dbReference type="FunFam" id="1.20.810.10:FF:000002">
    <property type="entry name" value="Cytochrome b"/>
    <property type="match status" value="1"/>
</dbReference>
<dbReference type="Gene3D" id="1.20.810.10">
    <property type="entry name" value="Cytochrome Bc1 Complex, Chain C"/>
    <property type="match status" value="1"/>
</dbReference>
<dbReference type="InterPro" id="IPR005798">
    <property type="entry name" value="Cyt_b/b6_C"/>
</dbReference>
<dbReference type="InterPro" id="IPR036150">
    <property type="entry name" value="Cyt_b/b6_C_sf"/>
</dbReference>
<dbReference type="InterPro" id="IPR005797">
    <property type="entry name" value="Cyt_b/b6_N"/>
</dbReference>
<dbReference type="InterPro" id="IPR027387">
    <property type="entry name" value="Cytb/b6-like_sf"/>
</dbReference>
<dbReference type="InterPro" id="IPR030689">
    <property type="entry name" value="Cytochrome_b"/>
</dbReference>
<dbReference type="InterPro" id="IPR048260">
    <property type="entry name" value="Cytochrome_b_C_euk/bac"/>
</dbReference>
<dbReference type="InterPro" id="IPR048259">
    <property type="entry name" value="Cytochrome_b_N_euk/bac"/>
</dbReference>
<dbReference type="InterPro" id="IPR016174">
    <property type="entry name" value="Di-haem_cyt_TM"/>
</dbReference>
<dbReference type="PANTHER" id="PTHR19271">
    <property type="entry name" value="CYTOCHROME B"/>
    <property type="match status" value="1"/>
</dbReference>
<dbReference type="PANTHER" id="PTHR19271:SF16">
    <property type="entry name" value="CYTOCHROME B"/>
    <property type="match status" value="1"/>
</dbReference>
<dbReference type="Pfam" id="PF00032">
    <property type="entry name" value="Cytochrom_B_C"/>
    <property type="match status" value="1"/>
</dbReference>
<dbReference type="Pfam" id="PF00033">
    <property type="entry name" value="Cytochrome_B"/>
    <property type="match status" value="1"/>
</dbReference>
<dbReference type="PIRSF" id="PIRSF038885">
    <property type="entry name" value="COB"/>
    <property type="match status" value="1"/>
</dbReference>
<dbReference type="SUPFAM" id="SSF81648">
    <property type="entry name" value="a domain/subunit of cytochrome bc1 complex (Ubiquinol-cytochrome c reductase)"/>
    <property type="match status" value="1"/>
</dbReference>
<dbReference type="SUPFAM" id="SSF81342">
    <property type="entry name" value="Transmembrane di-heme cytochromes"/>
    <property type="match status" value="1"/>
</dbReference>
<dbReference type="PROSITE" id="PS51003">
    <property type="entry name" value="CYTB_CTER"/>
    <property type="match status" value="1"/>
</dbReference>
<dbReference type="PROSITE" id="PS51002">
    <property type="entry name" value="CYTB_NTER"/>
    <property type="match status" value="1"/>
</dbReference>
<proteinExistence type="inferred from homology"/>